<proteinExistence type="inferred from homology"/>
<protein>
    <recommendedName>
        <fullName>UPF0329 protein ECU03_0090</fullName>
    </recommendedName>
</protein>
<dbReference type="EMBL" id="AL590443">
    <property type="protein sequence ID" value="CAD26156.2"/>
    <property type="molecule type" value="Genomic_DNA"/>
</dbReference>
<dbReference type="RefSeq" id="NP_597521.2">
    <property type="nucleotide sequence ID" value="NM_001040885.2"/>
</dbReference>
<dbReference type="SMR" id="Q8SW78"/>
<dbReference type="STRING" id="284813.Q8SW78"/>
<dbReference type="GeneID" id="858683"/>
<dbReference type="KEGG" id="ecu:ECU03_0090"/>
<dbReference type="VEuPathDB" id="MicrosporidiaDB:ECU03_0090"/>
<dbReference type="HOGENOM" id="CLU_035434_0_0_1"/>
<dbReference type="InParanoid" id="Q8SW78"/>
<dbReference type="Proteomes" id="UP000000819">
    <property type="component" value="Chromosome III"/>
</dbReference>
<dbReference type="InterPro" id="IPR022115">
    <property type="entry name" value="DUF3654"/>
</dbReference>
<dbReference type="InterPro" id="IPR011667">
    <property type="entry name" value="UPF0329"/>
</dbReference>
<dbReference type="Pfam" id="PF07753">
    <property type="entry name" value="DUF1609"/>
    <property type="match status" value="1"/>
</dbReference>
<dbReference type="Pfam" id="PF12376">
    <property type="entry name" value="DUF3654"/>
    <property type="match status" value="1"/>
</dbReference>
<sequence>MRMWLVSAIALVDILCTSKIEELVENMGKKIEEALPHEFDSAEKEALKKHLKETAGLGTRLMVPCIFHEDRVVASPTTRYQDIDEEEKGYVEKVIALLPRLLWRSVAYIYVFGNDSWVVNLMEEVFETAPFKKSDAVALYKRARGRLGIRLIDLVNRTFRHNIGMLNRFGQRLAQEAEAKIQEISSSLSDEEKRKEEKMLQIIKEYGESLCTKEKQEEIIRAQEIMCDACACIWERDSNRESFVMETYSRHLYLRMIGSSMDVEEPLLSYIDHRGLIDAYEKYKSIDIVAELIKQVFTERGCISDESVNDAVCGVREREEAEKMRGEEERRKKEEESLRNTLELLRMEEKEKSKSRGKKKKGGKKGSGEVTAKMEEEKKDSEEVEESAEAEVSLEEMAVGGARSKERSSKKKSRSKGHRYKVHKRVLRWTKSAERIKAELDEGSEEKWRNKSIEEIEEQKKVHDIIEVCVLLRSLDANRFFVSTNRYMKDGTERWKMVGVGIFEEGGEKKVGKVEVGLYRDKGEGSVIYHLMFKAMDTEKAGKGARSSFGKGDDVEGLEEGAGELSDMSGFEYPKGVRSEIVKGGDAFKIVYRNPKDTSEVLRSLTVLQKAEVL</sequence>
<reference key="1">
    <citation type="journal article" date="2001" name="Nature">
        <title>Genome sequence and gene compaction of the eukaryote parasite Encephalitozoon cuniculi.</title>
        <authorList>
            <person name="Katinka M.D."/>
            <person name="Duprat S."/>
            <person name="Cornillot E."/>
            <person name="Metenier G."/>
            <person name="Thomarat F."/>
            <person name="Prensier G."/>
            <person name="Barbe V."/>
            <person name="Peyretaillade E."/>
            <person name="Brottier P."/>
            <person name="Wincker P."/>
            <person name="Delbac F."/>
            <person name="El Alaoui H."/>
            <person name="Peyret P."/>
            <person name="Saurin W."/>
            <person name="Gouy M."/>
            <person name="Weissenbach J."/>
            <person name="Vivares C.P."/>
        </authorList>
    </citation>
    <scope>NUCLEOTIDE SEQUENCE [LARGE SCALE GENOMIC DNA]</scope>
    <source>
        <strain>GB-M1</strain>
    </source>
</reference>
<reference key="2">
    <citation type="journal article" date="2009" name="BMC Genomics">
        <title>Identification of transcriptional signals in Encephalitozoon cuniculi widespread among Microsporidia phylum: support for accurate structural genome annotation.</title>
        <authorList>
            <person name="Peyretaillade E."/>
            <person name="Goncalves O."/>
            <person name="Terrat S."/>
            <person name="Dugat-Bony E."/>
            <person name="Wincker P."/>
            <person name="Cornman R.S."/>
            <person name="Evans J.D."/>
            <person name="Delbac F."/>
            <person name="Peyret P."/>
        </authorList>
    </citation>
    <scope>GENOME REANNOTATION</scope>
    <source>
        <strain>GB-M1</strain>
    </source>
</reference>
<name>Y309_ENCCU</name>
<gene>
    <name type="ordered locus">ECU03_0090</name>
</gene>
<comment type="similarity">
    <text evidence="2">Belongs to the UPF0329 family.</text>
</comment>
<feature type="chain" id="PRO_0000223154" description="UPF0329 protein ECU03_0090">
    <location>
        <begin position="1"/>
        <end position="614"/>
    </location>
</feature>
<feature type="region of interest" description="Disordered" evidence="1">
    <location>
        <begin position="317"/>
        <end position="420"/>
    </location>
</feature>
<feature type="compositionally biased region" description="Basic and acidic residues" evidence="1">
    <location>
        <begin position="317"/>
        <end position="338"/>
    </location>
</feature>
<feature type="compositionally biased region" description="Basic and acidic residues" evidence="1">
    <location>
        <begin position="345"/>
        <end position="354"/>
    </location>
</feature>
<feature type="compositionally biased region" description="Basic residues" evidence="1">
    <location>
        <begin position="355"/>
        <end position="364"/>
    </location>
</feature>
<feature type="compositionally biased region" description="Basic and acidic residues" evidence="1">
    <location>
        <begin position="372"/>
        <end position="381"/>
    </location>
</feature>
<feature type="compositionally biased region" description="Acidic residues" evidence="1">
    <location>
        <begin position="382"/>
        <end position="394"/>
    </location>
</feature>
<feature type="compositionally biased region" description="Basic residues" evidence="1">
    <location>
        <begin position="408"/>
        <end position="420"/>
    </location>
</feature>
<evidence type="ECO:0000256" key="1">
    <source>
        <dbReference type="SAM" id="MobiDB-lite"/>
    </source>
</evidence>
<evidence type="ECO:0000305" key="2"/>
<organism>
    <name type="scientific">Encephalitozoon cuniculi (strain GB-M1)</name>
    <name type="common">Microsporidian parasite</name>
    <dbReference type="NCBI Taxonomy" id="284813"/>
    <lineage>
        <taxon>Eukaryota</taxon>
        <taxon>Fungi</taxon>
        <taxon>Fungi incertae sedis</taxon>
        <taxon>Microsporidia</taxon>
        <taxon>Unikaryonidae</taxon>
        <taxon>Encephalitozoon</taxon>
    </lineage>
</organism>
<keyword id="KW-1185">Reference proteome</keyword>
<accession>Q8SW78</accession>